<dbReference type="EMBL" id="AC023904">
    <property type="status" value="NOT_ANNOTATED_CDS"/>
    <property type="molecule type" value="Genomic_DNA"/>
</dbReference>
<dbReference type="EMBL" id="BC119749">
    <property type="status" value="NOT_ANNOTATED_CDS"/>
    <property type="molecule type" value="mRNA"/>
</dbReference>
<dbReference type="EMBL" id="BC119750">
    <property type="status" value="NOT_ANNOTATED_CDS"/>
    <property type="molecule type" value="mRNA"/>
</dbReference>
<dbReference type="iPTMnet" id="A4QN01"/>
<dbReference type="PhosphoSitePlus" id="A4QN01"/>
<dbReference type="BioMuta" id="HGNC:23524"/>
<dbReference type="MassIVE" id="A4QN01"/>
<dbReference type="AGR" id="HGNC:23524"/>
<dbReference type="GeneCards" id="LINC01553"/>
<dbReference type="HGNC" id="HGNC:23524">
    <property type="gene designation" value="LINC01553"/>
</dbReference>
<dbReference type="neXtProt" id="NX_A4QN01"/>
<dbReference type="InParanoid" id="A4QN01"/>
<dbReference type="PAN-GO" id="A4QN01">
    <property type="GO annotations" value="0 GO annotations based on evolutionary models"/>
</dbReference>
<dbReference type="PhylomeDB" id="A4QN01"/>
<dbReference type="TreeFam" id="TF353795"/>
<dbReference type="Pharos" id="A4QN01">
    <property type="development level" value="Tdark"/>
</dbReference>
<dbReference type="PRO" id="PR:A4QN01"/>
<dbReference type="Proteomes" id="UP000005640">
    <property type="component" value="Unplaced"/>
</dbReference>
<dbReference type="RNAct" id="A4QN01">
    <property type="molecule type" value="protein"/>
</dbReference>
<gene>
    <name evidence="1" type="primary">LINC01553</name>
    <name evidence="1" type="synonym">C10orf40</name>
</gene>
<sequence>MKHKYNTLSWYKKERSTQLRRFIVHQPEVGLFFFLRDVVYNYITEKTTCRCPLTQERPCDTGGKFGRIWICQPEELGKMQIWICQPEELGKMQIDKNRTMVQQMWYIWYGGLDTSTNSLLPILVRGMA</sequence>
<reference key="1">
    <citation type="journal article" date="2004" name="Nature">
        <title>The DNA sequence and comparative analysis of human chromosome 10.</title>
        <authorList>
            <person name="Deloukas P."/>
            <person name="Earthrowl M.E."/>
            <person name="Grafham D.V."/>
            <person name="Rubenfield M."/>
            <person name="French L."/>
            <person name="Steward C.A."/>
            <person name="Sims S.K."/>
            <person name="Jones M.C."/>
            <person name="Searle S."/>
            <person name="Scott C."/>
            <person name="Howe K."/>
            <person name="Hunt S.E."/>
            <person name="Andrews T.D."/>
            <person name="Gilbert J.G.R."/>
            <person name="Swarbreck D."/>
            <person name="Ashurst J.L."/>
            <person name="Taylor A."/>
            <person name="Battles J."/>
            <person name="Bird C.P."/>
            <person name="Ainscough R."/>
            <person name="Almeida J.P."/>
            <person name="Ashwell R.I.S."/>
            <person name="Ambrose K.D."/>
            <person name="Babbage A.K."/>
            <person name="Bagguley C.L."/>
            <person name="Bailey J."/>
            <person name="Banerjee R."/>
            <person name="Bates K."/>
            <person name="Beasley H."/>
            <person name="Bray-Allen S."/>
            <person name="Brown A.J."/>
            <person name="Brown J.Y."/>
            <person name="Burford D.C."/>
            <person name="Burrill W."/>
            <person name="Burton J."/>
            <person name="Cahill P."/>
            <person name="Camire D."/>
            <person name="Carter N.P."/>
            <person name="Chapman J.C."/>
            <person name="Clark S.Y."/>
            <person name="Clarke G."/>
            <person name="Clee C.M."/>
            <person name="Clegg S."/>
            <person name="Corby N."/>
            <person name="Coulson A."/>
            <person name="Dhami P."/>
            <person name="Dutta I."/>
            <person name="Dunn M."/>
            <person name="Faulkner L."/>
            <person name="Frankish A."/>
            <person name="Frankland J.A."/>
            <person name="Garner P."/>
            <person name="Garnett J."/>
            <person name="Gribble S."/>
            <person name="Griffiths C."/>
            <person name="Grocock R."/>
            <person name="Gustafson E."/>
            <person name="Hammond S."/>
            <person name="Harley J.L."/>
            <person name="Hart E."/>
            <person name="Heath P.D."/>
            <person name="Ho T.P."/>
            <person name="Hopkins B."/>
            <person name="Horne J."/>
            <person name="Howden P.J."/>
            <person name="Huckle E."/>
            <person name="Hynds C."/>
            <person name="Johnson C."/>
            <person name="Johnson D."/>
            <person name="Kana A."/>
            <person name="Kay M."/>
            <person name="Kimberley A.M."/>
            <person name="Kershaw J.K."/>
            <person name="Kokkinaki M."/>
            <person name="Laird G.K."/>
            <person name="Lawlor S."/>
            <person name="Lee H.M."/>
            <person name="Leongamornlert D.A."/>
            <person name="Laird G."/>
            <person name="Lloyd C."/>
            <person name="Lloyd D.M."/>
            <person name="Loveland J."/>
            <person name="Lovell J."/>
            <person name="McLaren S."/>
            <person name="McLay K.E."/>
            <person name="McMurray A."/>
            <person name="Mashreghi-Mohammadi M."/>
            <person name="Matthews L."/>
            <person name="Milne S."/>
            <person name="Nickerson T."/>
            <person name="Nguyen M."/>
            <person name="Overton-Larty E."/>
            <person name="Palmer S.A."/>
            <person name="Pearce A.V."/>
            <person name="Peck A.I."/>
            <person name="Pelan S."/>
            <person name="Phillimore B."/>
            <person name="Porter K."/>
            <person name="Rice C.M."/>
            <person name="Rogosin A."/>
            <person name="Ross M.T."/>
            <person name="Sarafidou T."/>
            <person name="Sehra H.K."/>
            <person name="Shownkeen R."/>
            <person name="Skuce C.D."/>
            <person name="Smith M."/>
            <person name="Standring L."/>
            <person name="Sycamore N."/>
            <person name="Tester J."/>
            <person name="Thorpe A."/>
            <person name="Torcasso W."/>
            <person name="Tracey A."/>
            <person name="Tromans A."/>
            <person name="Tsolas J."/>
            <person name="Wall M."/>
            <person name="Walsh J."/>
            <person name="Wang H."/>
            <person name="Weinstock K."/>
            <person name="West A.P."/>
            <person name="Willey D.L."/>
            <person name="Whitehead S.L."/>
            <person name="Wilming L."/>
            <person name="Wray P.W."/>
            <person name="Young L."/>
            <person name="Chen Y."/>
            <person name="Lovering R.C."/>
            <person name="Moschonas N.K."/>
            <person name="Siebert R."/>
            <person name="Fechtel K."/>
            <person name="Bentley D."/>
            <person name="Durbin R.M."/>
            <person name="Hubbard T."/>
            <person name="Doucette-Stamm L."/>
            <person name="Beck S."/>
            <person name="Smith D.R."/>
            <person name="Rogers J."/>
        </authorList>
    </citation>
    <scope>NUCLEOTIDE SEQUENCE [LARGE SCALE GENOMIC DNA]</scope>
</reference>
<reference key="2">
    <citation type="journal article" date="2004" name="Genome Res.">
        <title>The status, quality, and expansion of the NIH full-length cDNA project: the Mammalian Gene Collection (MGC).</title>
        <authorList>
            <consortium name="The MGC Project Team"/>
        </authorList>
    </citation>
    <scope>NUCLEOTIDE SEQUENCE [LARGE SCALE MRNA]</scope>
</reference>
<protein>
    <recommendedName>
        <fullName evidence="1">Putative uncharacterized protein encoded by LINC01553</fullName>
    </recommendedName>
</protein>
<keyword id="KW-1185">Reference proteome</keyword>
<proteinExistence type="evidence at transcript level"/>
<evidence type="ECO:0000312" key="1">
    <source>
        <dbReference type="HGNC" id="HGNC:23524"/>
    </source>
</evidence>
<feature type="chain" id="PRO_0000294239" description="Putative uncharacterized protein encoded by LINC01553">
    <location>
        <begin position="1"/>
        <end position="128"/>
    </location>
</feature>
<accession>A4QN01</accession>
<accession>A6NCD0</accession>
<organism>
    <name type="scientific">Homo sapiens</name>
    <name type="common">Human</name>
    <dbReference type="NCBI Taxonomy" id="9606"/>
    <lineage>
        <taxon>Eukaryota</taxon>
        <taxon>Metazoa</taxon>
        <taxon>Chordata</taxon>
        <taxon>Craniata</taxon>
        <taxon>Vertebrata</taxon>
        <taxon>Euteleostomi</taxon>
        <taxon>Mammalia</taxon>
        <taxon>Eutheria</taxon>
        <taxon>Euarchontoglires</taxon>
        <taxon>Primates</taxon>
        <taxon>Haplorrhini</taxon>
        <taxon>Catarrhini</taxon>
        <taxon>Hominidae</taxon>
        <taxon>Homo</taxon>
    </lineage>
</organism>
<name>CJ040_HUMAN</name>